<dbReference type="EMBL" id="L77117">
    <property type="protein sequence ID" value="AAB99483.1"/>
    <property type="molecule type" value="Genomic_DNA"/>
</dbReference>
<dbReference type="PIR" id="B64483">
    <property type="entry name" value="B64483"/>
</dbReference>
<dbReference type="FunCoup" id="Q58862">
    <property type="interactions" value="2"/>
</dbReference>
<dbReference type="STRING" id="243232.MJ_1467"/>
<dbReference type="PaxDb" id="243232-MJ_1467"/>
<dbReference type="EnsemblBacteria" id="AAB99483">
    <property type="protein sequence ID" value="AAB99483"/>
    <property type="gene ID" value="MJ_1467"/>
</dbReference>
<dbReference type="KEGG" id="mja:MJ_1467"/>
<dbReference type="eggNOG" id="arCOG06584">
    <property type="taxonomic scope" value="Archaea"/>
</dbReference>
<dbReference type="HOGENOM" id="CLU_125809_0_0_2"/>
<dbReference type="InParanoid" id="Q58862"/>
<dbReference type="OrthoDB" id="65838at2157"/>
<dbReference type="Proteomes" id="UP000000805">
    <property type="component" value="Chromosome"/>
</dbReference>
<gene>
    <name type="ordered locus">MJ1467</name>
</gene>
<organism>
    <name type="scientific">Methanocaldococcus jannaschii (strain ATCC 43067 / DSM 2661 / JAL-1 / JCM 10045 / NBRC 100440)</name>
    <name type="common">Methanococcus jannaschii</name>
    <dbReference type="NCBI Taxonomy" id="243232"/>
    <lineage>
        <taxon>Archaea</taxon>
        <taxon>Methanobacteriati</taxon>
        <taxon>Methanobacteriota</taxon>
        <taxon>Methanomada group</taxon>
        <taxon>Methanococci</taxon>
        <taxon>Methanococcales</taxon>
        <taxon>Methanocaldococcaceae</taxon>
        <taxon>Methanocaldococcus</taxon>
    </lineage>
</organism>
<feature type="chain" id="PRO_0000107353" description="Uncharacterized protein MJ1467">
    <location>
        <begin position="1"/>
        <end position="184"/>
    </location>
</feature>
<protein>
    <recommendedName>
        <fullName>Uncharacterized protein MJ1467</fullName>
    </recommendedName>
</protein>
<proteinExistence type="predicted"/>
<reference key="1">
    <citation type="journal article" date="1996" name="Science">
        <title>Complete genome sequence of the methanogenic archaeon, Methanococcus jannaschii.</title>
        <authorList>
            <person name="Bult C.J."/>
            <person name="White O."/>
            <person name="Olsen G.J."/>
            <person name="Zhou L."/>
            <person name="Fleischmann R.D."/>
            <person name="Sutton G.G."/>
            <person name="Blake J.A."/>
            <person name="FitzGerald L.M."/>
            <person name="Clayton R.A."/>
            <person name="Gocayne J.D."/>
            <person name="Kerlavage A.R."/>
            <person name="Dougherty B.A."/>
            <person name="Tomb J.-F."/>
            <person name="Adams M.D."/>
            <person name="Reich C.I."/>
            <person name="Overbeek R."/>
            <person name="Kirkness E.F."/>
            <person name="Weinstock K.G."/>
            <person name="Merrick J.M."/>
            <person name="Glodek A."/>
            <person name="Scott J.L."/>
            <person name="Geoghagen N.S.M."/>
            <person name="Weidman J.F."/>
            <person name="Fuhrmann J.L."/>
            <person name="Nguyen D."/>
            <person name="Utterback T.R."/>
            <person name="Kelley J.M."/>
            <person name="Peterson J.D."/>
            <person name="Sadow P.W."/>
            <person name="Hanna M.C."/>
            <person name="Cotton M.D."/>
            <person name="Roberts K.M."/>
            <person name="Hurst M.A."/>
            <person name="Kaine B.P."/>
            <person name="Borodovsky M."/>
            <person name="Klenk H.-P."/>
            <person name="Fraser C.M."/>
            <person name="Smith H.O."/>
            <person name="Woese C.R."/>
            <person name="Venter J.C."/>
        </authorList>
    </citation>
    <scope>NUCLEOTIDE SEQUENCE [LARGE SCALE GENOMIC DNA]</scope>
    <source>
        <strain>ATCC 43067 / DSM 2661 / JAL-1 / JCM 10045 / NBRC 100440</strain>
    </source>
</reference>
<accession>Q58862</accession>
<name>Y1467_METJA</name>
<sequence>MEKYKLRKNNTILLYDYSINFSIKDNVKLEKKRFNMNKNKIKKRGQLSVDFVLAILFLMLVSLFIYYNALTFTNNTTDALIVDRMYSIADTFENYAILSYTKNETIVLKLKPIGDLGYVIHVSNKIINVSYKTLIVFTPTDNGVIISGSNIETAPVDIGKNISITVTIDKNNITICKELTINIT</sequence>
<keyword id="KW-1185">Reference proteome</keyword>